<dbReference type="EC" id="2.7.7.6" evidence="1"/>
<dbReference type="EMBL" id="CP000312">
    <property type="protein sequence ID" value="ABG85828.1"/>
    <property type="molecule type" value="Genomic_DNA"/>
</dbReference>
<dbReference type="RefSeq" id="WP_011593138.1">
    <property type="nucleotide sequence ID" value="NC_008262.1"/>
</dbReference>
<dbReference type="SMR" id="Q0SQD6"/>
<dbReference type="KEGG" id="cpr:CPR_2408"/>
<dbReference type="Proteomes" id="UP000001824">
    <property type="component" value="Chromosome"/>
</dbReference>
<dbReference type="GO" id="GO:0000428">
    <property type="term" value="C:DNA-directed RNA polymerase complex"/>
    <property type="evidence" value="ECO:0007669"/>
    <property type="project" value="UniProtKB-KW"/>
</dbReference>
<dbReference type="GO" id="GO:0003677">
    <property type="term" value="F:DNA binding"/>
    <property type="evidence" value="ECO:0007669"/>
    <property type="project" value="UniProtKB-UniRule"/>
</dbReference>
<dbReference type="GO" id="GO:0003899">
    <property type="term" value="F:DNA-directed RNA polymerase activity"/>
    <property type="evidence" value="ECO:0007669"/>
    <property type="project" value="UniProtKB-UniRule"/>
</dbReference>
<dbReference type="GO" id="GO:0032549">
    <property type="term" value="F:ribonucleoside binding"/>
    <property type="evidence" value="ECO:0007669"/>
    <property type="project" value="InterPro"/>
</dbReference>
<dbReference type="GO" id="GO:0006351">
    <property type="term" value="P:DNA-templated transcription"/>
    <property type="evidence" value="ECO:0007669"/>
    <property type="project" value="UniProtKB-UniRule"/>
</dbReference>
<dbReference type="CDD" id="cd00653">
    <property type="entry name" value="RNA_pol_B_RPB2"/>
    <property type="match status" value="1"/>
</dbReference>
<dbReference type="FunFam" id="3.90.1800.10:FF:000001">
    <property type="entry name" value="DNA-directed RNA polymerase subunit beta"/>
    <property type="match status" value="1"/>
</dbReference>
<dbReference type="Gene3D" id="2.40.50.100">
    <property type="match status" value="1"/>
</dbReference>
<dbReference type="Gene3D" id="2.40.50.150">
    <property type="match status" value="1"/>
</dbReference>
<dbReference type="Gene3D" id="3.90.1100.10">
    <property type="match status" value="2"/>
</dbReference>
<dbReference type="Gene3D" id="2.30.150.10">
    <property type="entry name" value="DNA-directed RNA polymerase, beta subunit, external 1 domain"/>
    <property type="match status" value="1"/>
</dbReference>
<dbReference type="Gene3D" id="2.40.270.10">
    <property type="entry name" value="DNA-directed RNA polymerase, subunit 2, domain 6"/>
    <property type="match status" value="2"/>
</dbReference>
<dbReference type="Gene3D" id="3.90.1800.10">
    <property type="entry name" value="RNA polymerase alpha subunit dimerisation domain"/>
    <property type="match status" value="1"/>
</dbReference>
<dbReference type="Gene3D" id="3.90.1110.10">
    <property type="entry name" value="RNA polymerase Rpb2, domain 2"/>
    <property type="match status" value="2"/>
</dbReference>
<dbReference type="HAMAP" id="MF_01321">
    <property type="entry name" value="RNApol_bact_RpoB"/>
    <property type="match status" value="1"/>
</dbReference>
<dbReference type="InterPro" id="IPR042107">
    <property type="entry name" value="DNA-dir_RNA_pol_bsu_ext_1_sf"/>
</dbReference>
<dbReference type="InterPro" id="IPR019462">
    <property type="entry name" value="DNA-dir_RNA_pol_bsu_external_1"/>
</dbReference>
<dbReference type="InterPro" id="IPR015712">
    <property type="entry name" value="DNA-dir_RNA_pol_su2"/>
</dbReference>
<dbReference type="InterPro" id="IPR007120">
    <property type="entry name" value="DNA-dir_RNAP_su2_dom"/>
</dbReference>
<dbReference type="InterPro" id="IPR037033">
    <property type="entry name" value="DNA-dir_RNAP_su2_hyb_sf"/>
</dbReference>
<dbReference type="InterPro" id="IPR010243">
    <property type="entry name" value="RNA_pol_bsu_bac"/>
</dbReference>
<dbReference type="InterPro" id="IPR007121">
    <property type="entry name" value="RNA_pol_bsu_CS"/>
</dbReference>
<dbReference type="InterPro" id="IPR007644">
    <property type="entry name" value="RNA_pol_bsu_protrusion"/>
</dbReference>
<dbReference type="InterPro" id="IPR007642">
    <property type="entry name" value="RNA_pol_Rpb2_2"/>
</dbReference>
<dbReference type="InterPro" id="IPR037034">
    <property type="entry name" value="RNA_pol_Rpb2_2_sf"/>
</dbReference>
<dbReference type="InterPro" id="IPR007645">
    <property type="entry name" value="RNA_pol_Rpb2_3"/>
</dbReference>
<dbReference type="InterPro" id="IPR007641">
    <property type="entry name" value="RNA_pol_Rpb2_7"/>
</dbReference>
<dbReference type="InterPro" id="IPR014724">
    <property type="entry name" value="RNA_pol_RPB2_OB-fold"/>
</dbReference>
<dbReference type="NCBIfam" id="NF001616">
    <property type="entry name" value="PRK00405.1"/>
    <property type="match status" value="1"/>
</dbReference>
<dbReference type="NCBIfam" id="TIGR02013">
    <property type="entry name" value="rpoB"/>
    <property type="match status" value="1"/>
</dbReference>
<dbReference type="PANTHER" id="PTHR20856">
    <property type="entry name" value="DNA-DIRECTED RNA POLYMERASE I SUBUNIT 2"/>
    <property type="match status" value="1"/>
</dbReference>
<dbReference type="Pfam" id="PF04563">
    <property type="entry name" value="RNA_pol_Rpb2_1"/>
    <property type="match status" value="1"/>
</dbReference>
<dbReference type="Pfam" id="PF04561">
    <property type="entry name" value="RNA_pol_Rpb2_2"/>
    <property type="match status" value="2"/>
</dbReference>
<dbReference type="Pfam" id="PF04565">
    <property type="entry name" value="RNA_pol_Rpb2_3"/>
    <property type="match status" value="1"/>
</dbReference>
<dbReference type="Pfam" id="PF10385">
    <property type="entry name" value="RNA_pol_Rpb2_45"/>
    <property type="match status" value="1"/>
</dbReference>
<dbReference type="Pfam" id="PF00562">
    <property type="entry name" value="RNA_pol_Rpb2_6"/>
    <property type="match status" value="1"/>
</dbReference>
<dbReference type="Pfam" id="PF04560">
    <property type="entry name" value="RNA_pol_Rpb2_7"/>
    <property type="match status" value="1"/>
</dbReference>
<dbReference type="SUPFAM" id="SSF64484">
    <property type="entry name" value="beta and beta-prime subunits of DNA dependent RNA-polymerase"/>
    <property type="match status" value="1"/>
</dbReference>
<dbReference type="PROSITE" id="PS01166">
    <property type="entry name" value="RNA_POL_BETA"/>
    <property type="match status" value="1"/>
</dbReference>
<protein>
    <recommendedName>
        <fullName evidence="1">DNA-directed RNA polymerase subunit beta</fullName>
        <shortName evidence="1">RNAP subunit beta</shortName>
        <ecNumber evidence="1">2.7.7.6</ecNumber>
    </recommendedName>
    <alternativeName>
        <fullName evidence="1">RNA polymerase subunit beta</fullName>
    </alternativeName>
    <alternativeName>
        <fullName evidence="1">Transcriptase subunit beta</fullName>
    </alternativeName>
</protein>
<proteinExistence type="inferred from homology"/>
<reference key="1">
    <citation type="journal article" date="2006" name="Genome Res.">
        <title>Skewed genomic variability in strains of the toxigenic bacterial pathogen, Clostridium perfringens.</title>
        <authorList>
            <person name="Myers G.S.A."/>
            <person name="Rasko D.A."/>
            <person name="Cheung J.K."/>
            <person name="Ravel J."/>
            <person name="Seshadri R."/>
            <person name="DeBoy R.T."/>
            <person name="Ren Q."/>
            <person name="Varga J."/>
            <person name="Awad M.M."/>
            <person name="Brinkac L.M."/>
            <person name="Daugherty S.C."/>
            <person name="Haft D.H."/>
            <person name="Dodson R.J."/>
            <person name="Madupu R."/>
            <person name="Nelson W.C."/>
            <person name="Rosovitz M.J."/>
            <person name="Sullivan S.A."/>
            <person name="Khouri H."/>
            <person name="Dimitrov G.I."/>
            <person name="Watkins K.L."/>
            <person name="Mulligan S."/>
            <person name="Benton J."/>
            <person name="Radune D."/>
            <person name="Fisher D.J."/>
            <person name="Atkins H.S."/>
            <person name="Hiscox T."/>
            <person name="Jost B.H."/>
            <person name="Billington S.J."/>
            <person name="Songer J.G."/>
            <person name="McClane B.A."/>
            <person name="Titball R.W."/>
            <person name="Rood J.I."/>
            <person name="Melville S.B."/>
            <person name="Paulsen I.T."/>
        </authorList>
    </citation>
    <scope>NUCLEOTIDE SEQUENCE [LARGE SCALE GENOMIC DNA]</scope>
    <source>
        <strain>SM101 / Type A</strain>
    </source>
</reference>
<gene>
    <name evidence="1" type="primary">rpoB</name>
    <name type="ordered locus">CPR_2408</name>
</gene>
<evidence type="ECO:0000255" key="1">
    <source>
        <dbReference type="HAMAP-Rule" id="MF_01321"/>
    </source>
</evidence>
<keyword id="KW-0240">DNA-directed RNA polymerase</keyword>
<keyword id="KW-0548">Nucleotidyltransferase</keyword>
<keyword id="KW-0804">Transcription</keyword>
<keyword id="KW-0808">Transferase</keyword>
<name>RPOB_CLOPS</name>
<accession>Q0SQD6</accession>
<feature type="chain" id="PRO_0000300302" description="DNA-directed RNA polymerase subunit beta">
    <location>
        <begin position="1"/>
        <end position="1234"/>
    </location>
</feature>
<sequence length="1234" mass="138566">MVHPVQVGKRTRMSFAKVKDVAEMPNLIEIQLDSYKWFLDAGLYEVFDDINPISNFTGNLVLEFVGYTLDMDNIKYSVEECKERDTTYAAPLKVAVRLQNKETGEIKEQEVFMGDFPLMTEQGTFIINGAERVIVSQLVRSPGVYYNYNVDKTGKKLFSATVIPNRGAWLEYETDSNDVIYVRIDKTRKLPISILGRAMGFGSDQELLEYFGEEERFKATIEKDNTKTKEEALLEIYKRLRPGEPPTVDSAISLIDSLFFDAKRYDLSRVGRYKFNKKLAIGLRIANQIAAEDIVDKLTGEVLVAKGEKISRANAEEIQNRGINSVDVLVEDRVIRIIGNHFVDIHKCVDFDISDLNIRELVHYPTLREILDNYSDEETIKEEIKKNMTRLIPKHIIKDDIFATISYQIGLAYNIGYVDDIDHLGNRRLRSVGELLQNQFRIGLSRMERVVKERMTIQDQEAITPQQLINIRPVAAAIKEFFGSSQLSQFMDQTNPLSELTHKRRLSALGPGGLSRERAGFEVRDVHHSHYGRMCPIETPEGPNIGLINSLATYAKVNEYGFIETPYRVVDKSEGRVTGEIRYFTADEEDQYLVAQANEPLDENGCFIDKKVTVRDKGEVLVVPSKDVDLMDVSPRQLVSVATAMIPFLENDDASRALMGSNMQRQAVPLLKPYAPIVGTGIEYKAAVDSGVLPKAKNAGEVVYVSANEVRVKRELDGGVDTYRLLKFKRSNQGTCINQRPIVAKGDWVLKGEVLADGPSTDLGEIALGKNIRMGFITWEGYNYEDAMLISEELVREDVFTSIHIEEYECEARDTKLGPEEITRDIPNVSEDALKDIDERGIIRIGAEVRSGDILVGKVTPKGETELTAEERLLRAIFGEKAREVRDTSLRVPHGEAGIIVDVKVFTRENGDDLSPGVNELVRCYIAQKRKISVGDKMAGRHGNKGVISRVLPEEDMPFLPDGRPLQICLNPLGVPSRMNIGQVLEVHLGWAASALGWHIATPVFDGATETDIEDCLEKAGYNRNGKTVLRDGRTGEEFDNEVTVGIMYILKLAHLVDDKIHARSTGPYSLVTQQPLGGKAQFGGQRFGEMEVWALEAYGAAHTLQEILTVKSDDVVGRVKTYEAIVKGENIPEPGVPESFKVLIKELQALCLDVKVLNDNNQEVKFKELAEDDDEIEVLEVNMEGTEDSTTEEAKEEKGEAYIPAEEIDEEIDYENIDLLDFTSDLDIEDDFN</sequence>
<organism>
    <name type="scientific">Clostridium perfringens (strain SM101 / Type A)</name>
    <dbReference type="NCBI Taxonomy" id="289380"/>
    <lineage>
        <taxon>Bacteria</taxon>
        <taxon>Bacillati</taxon>
        <taxon>Bacillota</taxon>
        <taxon>Clostridia</taxon>
        <taxon>Eubacteriales</taxon>
        <taxon>Clostridiaceae</taxon>
        <taxon>Clostridium</taxon>
    </lineage>
</organism>
<comment type="function">
    <text evidence="1">DNA-dependent RNA polymerase catalyzes the transcription of DNA into RNA using the four ribonucleoside triphosphates as substrates.</text>
</comment>
<comment type="catalytic activity">
    <reaction evidence="1">
        <text>RNA(n) + a ribonucleoside 5'-triphosphate = RNA(n+1) + diphosphate</text>
        <dbReference type="Rhea" id="RHEA:21248"/>
        <dbReference type="Rhea" id="RHEA-COMP:14527"/>
        <dbReference type="Rhea" id="RHEA-COMP:17342"/>
        <dbReference type="ChEBI" id="CHEBI:33019"/>
        <dbReference type="ChEBI" id="CHEBI:61557"/>
        <dbReference type="ChEBI" id="CHEBI:140395"/>
        <dbReference type="EC" id="2.7.7.6"/>
    </reaction>
</comment>
<comment type="subunit">
    <text evidence="1">The RNAP catalytic core consists of 2 alpha, 1 beta, 1 beta' and 1 omega subunit. When a sigma factor is associated with the core the holoenzyme is formed, which can initiate transcription.</text>
</comment>
<comment type="similarity">
    <text evidence="1">Belongs to the RNA polymerase beta chain family.</text>
</comment>